<accession>Q9FFE8</accession>
<reference key="1">
    <citation type="journal article" date="1997" name="DNA Res.">
        <title>Structural analysis of Arabidopsis thaliana chromosome 5. I. Sequence features of the 1.6 Mb regions covered by twenty physically assigned P1 clones.</title>
        <authorList>
            <person name="Sato S."/>
            <person name="Kotani H."/>
            <person name="Nakamura Y."/>
            <person name="Kaneko T."/>
            <person name="Asamizu E."/>
            <person name="Fukami M."/>
            <person name="Miyajima N."/>
            <person name="Tabata S."/>
        </authorList>
    </citation>
    <scope>NUCLEOTIDE SEQUENCE [LARGE SCALE GENOMIC DNA]</scope>
    <source>
        <strain>cv. Columbia</strain>
    </source>
</reference>
<reference key="2">
    <citation type="journal article" date="2017" name="Plant J.">
        <title>Araport11: a complete reannotation of the Arabidopsis thaliana reference genome.</title>
        <authorList>
            <person name="Cheng C.Y."/>
            <person name="Krishnakumar V."/>
            <person name="Chan A.P."/>
            <person name="Thibaud-Nissen F."/>
            <person name="Schobel S."/>
            <person name="Town C.D."/>
        </authorList>
    </citation>
    <scope>GENOME REANNOTATION</scope>
    <source>
        <strain>cv. Columbia</strain>
    </source>
</reference>
<reference key="3">
    <citation type="journal article" date="2003" name="Science">
        <title>Empirical analysis of transcriptional activity in the Arabidopsis genome.</title>
        <authorList>
            <person name="Yamada K."/>
            <person name="Lim J."/>
            <person name="Dale J.M."/>
            <person name="Chen H."/>
            <person name="Shinn P."/>
            <person name="Palm C.J."/>
            <person name="Southwick A.M."/>
            <person name="Wu H.C."/>
            <person name="Kim C.J."/>
            <person name="Nguyen M."/>
            <person name="Pham P.K."/>
            <person name="Cheuk R.F."/>
            <person name="Karlin-Newmann G."/>
            <person name="Liu S.X."/>
            <person name="Lam B."/>
            <person name="Sakano H."/>
            <person name="Wu T."/>
            <person name="Yu G."/>
            <person name="Miranda M."/>
            <person name="Quach H.L."/>
            <person name="Tripp M."/>
            <person name="Chang C.H."/>
            <person name="Lee J.M."/>
            <person name="Toriumi M.J."/>
            <person name="Chan M.M."/>
            <person name="Tang C.C."/>
            <person name="Onodera C.S."/>
            <person name="Deng J.M."/>
            <person name="Akiyama K."/>
            <person name="Ansari Y."/>
            <person name="Arakawa T."/>
            <person name="Banh J."/>
            <person name="Banno F."/>
            <person name="Bowser L."/>
            <person name="Brooks S.Y."/>
            <person name="Carninci P."/>
            <person name="Chao Q."/>
            <person name="Choy N."/>
            <person name="Enju A."/>
            <person name="Goldsmith A.D."/>
            <person name="Gurjal M."/>
            <person name="Hansen N.F."/>
            <person name="Hayashizaki Y."/>
            <person name="Johnson-Hopson C."/>
            <person name="Hsuan V.W."/>
            <person name="Iida K."/>
            <person name="Karnes M."/>
            <person name="Khan S."/>
            <person name="Koesema E."/>
            <person name="Ishida J."/>
            <person name="Jiang P.X."/>
            <person name="Jones T."/>
            <person name="Kawai J."/>
            <person name="Kamiya A."/>
            <person name="Meyers C."/>
            <person name="Nakajima M."/>
            <person name="Narusaka M."/>
            <person name="Seki M."/>
            <person name="Sakurai T."/>
            <person name="Satou M."/>
            <person name="Tamse R."/>
            <person name="Vaysberg M."/>
            <person name="Wallender E.K."/>
            <person name="Wong C."/>
            <person name="Yamamura Y."/>
            <person name="Yuan S."/>
            <person name="Shinozaki K."/>
            <person name="Davis R.W."/>
            <person name="Theologis A."/>
            <person name="Ecker J.R."/>
        </authorList>
    </citation>
    <scope>NUCLEOTIDE SEQUENCE [LARGE SCALE MRNA]</scope>
    <source>
        <strain>cv. Columbia</strain>
    </source>
</reference>
<reference key="4">
    <citation type="journal article" date="2003" name="J. Biol. Chem.">
        <title>A novel bifunctional wax ester synthase/acyl-CoA:diacylglycerol acyltransferase mediates wax ester and triacylglycerol biosynthesis in Acinetobacter calcoaceticus ADP1.</title>
        <authorList>
            <person name="Kalscheuer R."/>
            <person name="Steinbuchel A."/>
        </authorList>
    </citation>
    <scope>GENE FAMILY</scope>
</reference>
<reference key="5">
    <citation type="journal article" date="2008" name="Plant Physiol.">
        <title>Identification of the wax ester synthase/acyl-coenzyme A: diacylglycerol acyltransferase WSD1 required for stem wax ester biosynthesis in Arabidopsis.</title>
        <authorList>
            <person name="Li F."/>
            <person name="Wu X."/>
            <person name="Lam P."/>
            <person name="Bird D."/>
            <person name="Zheng H."/>
            <person name="Samuels A.L."/>
            <person name="Jetter R."/>
            <person name="Kunst L."/>
        </authorList>
    </citation>
    <scope>GENE FAMILY</scope>
    <scope>NOMENCLATURE</scope>
</reference>
<reference key="6">
    <citation type="journal article" date="2013" name="Arabidopsis Book">
        <title>Acyl-lipid metabolism.</title>
        <authorList>
            <person name="Li-Beisson Y."/>
            <person name="Shorrosh B."/>
            <person name="Beisson F."/>
            <person name="Andersson M.X."/>
            <person name="Arondel V."/>
            <person name="Bates P.D."/>
            <person name="Baud S."/>
            <person name="Bird D."/>
            <person name="Debono A."/>
            <person name="Durrett T.P."/>
            <person name="Franke R.B."/>
            <person name="Graham I.A."/>
            <person name="Katayama K."/>
            <person name="Kelly A.A."/>
            <person name="Larson T."/>
            <person name="Markham J.E."/>
            <person name="Miquel M."/>
            <person name="Molina I."/>
            <person name="Nishida I."/>
            <person name="Rowland O."/>
            <person name="Samuels L."/>
            <person name="Schmid K.M."/>
            <person name="Wada H."/>
            <person name="Welti R."/>
            <person name="Xu C."/>
            <person name="Zallot R."/>
            <person name="Ohlrogge J."/>
        </authorList>
    </citation>
    <scope>REVIEW ON ACYL-LIPID METABOLISM</scope>
</reference>
<reference key="7">
    <citation type="journal article" date="2019" name="Plant J.">
        <title>Surface wax esters contribute to drought tolerance in Arabidopsis.</title>
        <authorList>
            <person name="Patwari P."/>
            <person name="Salewski V."/>
            <person name="Gutbrod K."/>
            <person name="Kreszies T."/>
            <person name="Dresen-Scholz B."/>
            <person name="Peisker H."/>
            <person name="Steiner U."/>
            <person name="Meyer A.J."/>
            <person name="Schreiber L."/>
            <person name="Doermann P."/>
        </authorList>
    </citation>
    <scope>TISSUE SPECIFICITY</scope>
    <source>
        <strain>cv. Columbia</strain>
    </source>
</reference>
<keyword id="KW-0012">Acyltransferase</keyword>
<keyword id="KW-1003">Cell membrane</keyword>
<keyword id="KW-0256">Endoplasmic reticulum</keyword>
<keyword id="KW-0325">Glycoprotein</keyword>
<keyword id="KW-0472">Membrane</keyword>
<keyword id="KW-1185">Reference proteome</keyword>
<keyword id="KW-0808">Transferase</keyword>
<keyword id="KW-0812">Transmembrane</keyword>
<keyword id="KW-1133">Transmembrane helix</keyword>
<feature type="chain" id="PRO_0000452618" description="Wax ester synthase/diacylglycerol acyltransferase 8">
    <location>
        <begin position="1"/>
        <end position="488"/>
    </location>
</feature>
<feature type="topological domain" description="Cytoplasmic" evidence="7">
    <location>
        <begin position="1"/>
        <end position="195"/>
    </location>
</feature>
<feature type="transmembrane region" description="Helical" evidence="3">
    <location>
        <begin position="196"/>
        <end position="214"/>
    </location>
</feature>
<feature type="topological domain" description="Lumenal" evidence="7">
    <location>
        <begin position="215"/>
        <end position="488"/>
    </location>
</feature>
<feature type="active site" description="Proton acceptor" evidence="3">
    <location>
        <position position="135"/>
    </location>
</feature>
<feature type="glycosylation site" description="N-linked (GlcNAc...) asparagine" evidence="4">
    <location>
        <position position="238"/>
    </location>
</feature>
<feature type="glycosylation site" description="N-linked (GlcNAc...) asparagine" evidence="4">
    <location>
        <position position="252"/>
    </location>
</feature>
<feature type="glycosylation site" description="N-linked (GlcNAc...) asparagine" evidence="4">
    <location>
        <position position="353"/>
    </location>
</feature>
<feature type="glycosylation site" description="N-linked (GlcNAc...) asparagine" evidence="4">
    <location>
        <position position="397"/>
    </location>
</feature>
<gene>
    <name evidence="6" type="primary">WSD8</name>
    <name evidence="8" type="ordered locus">At5g16350</name>
    <name evidence="9" type="ORF">MQK4.7</name>
</gene>
<organism>
    <name type="scientific">Arabidopsis thaliana</name>
    <name type="common">Mouse-ear cress</name>
    <dbReference type="NCBI Taxonomy" id="3702"/>
    <lineage>
        <taxon>Eukaryota</taxon>
        <taxon>Viridiplantae</taxon>
        <taxon>Streptophyta</taxon>
        <taxon>Embryophyta</taxon>
        <taxon>Tracheophyta</taxon>
        <taxon>Spermatophyta</taxon>
        <taxon>Magnoliopsida</taxon>
        <taxon>eudicotyledons</taxon>
        <taxon>Gunneridae</taxon>
        <taxon>Pentapetalae</taxon>
        <taxon>rosids</taxon>
        <taxon>malvids</taxon>
        <taxon>Brassicales</taxon>
        <taxon>Brassicaceae</taxon>
        <taxon>Camelineae</taxon>
        <taxon>Arabidopsis</taxon>
    </lineage>
</organism>
<sequence>MKNEEEEPLSPMARVFQSPDIDLCAIINIGFKTKINPDVVLDALKQNVYKHPRFSSKLSENGEKWIETEVNVEDHVIVPYIDPEDICEGGQSFVDDYISRLTLIPLDRSRPLWDIHILNVKTSYAEAVGVIRFNHALADGMSFISLVLACTHKTSNPDMLSTAIPSVKRRSTVSHSLKKTGWFLTAIFTIGSTMRLIWNTLVDMFLLFATMLFLKDTKTPLKGGANVRSNPKTFYHRNISLDDIKLIKNAMNMTINDVLLGITQAALSSYLNRRYEHENNNEEDGVLTSYTNNLPDRIRFRAGCTVNLRSDIGFKPLAEMMVKDSKCRWGNYFSFIILPLSISLETDPLVYLNKSKAMMARTKHSYQAALTYFLIKISLKVLGAKATTSLFNQHLMNITTCVSNVMGPMEEISFNGHPVAYISPSSYGHSHALLIHYTSYAGEMTITITVDPTVIPDPHKICDDMEESLKTMKAVLWERGLLKEAYKV</sequence>
<dbReference type="EC" id="2.3.1.20" evidence="2"/>
<dbReference type="EC" id="2.3.1.75" evidence="2"/>
<dbReference type="EMBL" id="AB005242">
    <property type="protein sequence ID" value="BAB09602.1"/>
    <property type="molecule type" value="Genomic_DNA"/>
</dbReference>
<dbReference type="EMBL" id="CP002688">
    <property type="protein sequence ID" value="AED92282.1"/>
    <property type="molecule type" value="Genomic_DNA"/>
</dbReference>
<dbReference type="EMBL" id="BT004100">
    <property type="protein sequence ID" value="AAO42125.1"/>
    <property type="molecule type" value="mRNA"/>
</dbReference>
<dbReference type="EMBL" id="BT006151">
    <property type="protein sequence ID" value="AAP04136.1"/>
    <property type="molecule type" value="mRNA"/>
</dbReference>
<dbReference type="RefSeq" id="NP_197139.1">
    <property type="nucleotide sequence ID" value="NM_121640.5"/>
</dbReference>
<dbReference type="SMR" id="Q9FFE8"/>
<dbReference type="STRING" id="3702.Q9FFE8"/>
<dbReference type="GlyCosmos" id="Q9FFE8">
    <property type="glycosylation" value="4 sites, No reported glycans"/>
</dbReference>
<dbReference type="GlyGen" id="Q9FFE8">
    <property type="glycosylation" value="4 sites"/>
</dbReference>
<dbReference type="PaxDb" id="3702-AT5G16350.1"/>
<dbReference type="DNASU" id="831496"/>
<dbReference type="EnsemblPlants" id="AT5G16350.1">
    <property type="protein sequence ID" value="AT5G16350.1"/>
    <property type="gene ID" value="AT5G16350"/>
</dbReference>
<dbReference type="GeneID" id="831496"/>
<dbReference type="Gramene" id="AT5G16350.1">
    <property type="protein sequence ID" value="AT5G16350.1"/>
    <property type="gene ID" value="AT5G16350"/>
</dbReference>
<dbReference type="KEGG" id="ath:AT5G16350"/>
<dbReference type="Araport" id="AT5G16350"/>
<dbReference type="TAIR" id="AT5G16350"/>
<dbReference type="eggNOG" id="ENOG502QU8B">
    <property type="taxonomic scope" value="Eukaryota"/>
</dbReference>
<dbReference type="HOGENOM" id="CLU_027831_0_0_1"/>
<dbReference type="InParanoid" id="Q9FFE8"/>
<dbReference type="PhylomeDB" id="Q9FFE8"/>
<dbReference type="UniPathway" id="UPA00282"/>
<dbReference type="PRO" id="PR:Q9FFE8"/>
<dbReference type="Proteomes" id="UP000006548">
    <property type="component" value="Chromosome 5"/>
</dbReference>
<dbReference type="ExpressionAtlas" id="Q9FFE8">
    <property type="expression patterns" value="baseline and differential"/>
</dbReference>
<dbReference type="GO" id="GO:0005789">
    <property type="term" value="C:endoplasmic reticulum membrane"/>
    <property type="evidence" value="ECO:0007669"/>
    <property type="project" value="UniProtKB-SubCell"/>
</dbReference>
<dbReference type="GO" id="GO:0005886">
    <property type="term" value="C:plasma membrane"/>
    <property type="evidence" value="ECO:0007669"/>
    <property type="project" value="UniProtKB-SubCell"/>
</dbReference>
<dbReference type="GO" id="GO:0004144">
    <property type="term" value="F:diacylglycerol O-acyltransferase activity"/>
    <property type="evidence" value="ECO:0007669"/>
    <property type="project" value="UniProtKB-EC"/>
</dbReference>
<dbReference type="GO" id="GO:0047196">
    <property type="term" value="F:long-chain-alcohol O-fatty-acyltransferase activity"/>
    <property type="evidence" value="ECO:0007669"/>
    <property type="project" value="UniProtKB-EC"/>
</dbReference>
<dbReference type="GO" id="GO:0019432">
    <property type="term" value="P:triglyceride biosynthetic process"/>
    <property type="evidence" value="ECO:0007669"/>
    <property type="project" value="UniProtKB-UniPathway"/>
</dbReference>
<dbReference type="InterPro" id="IPR045034">
    <property type="entry name" value="O-acyltransferase_WSD1-like"/>
</dbReference>
<dbReference type="InterPro" id="IPR009721">
    <property type="entry name" value="O-acyltransferase_WSD1_C"/>
</dbReference>
<dbReference type="InterPro" id="IPR004255">
    <property type="entry name" value="O-acyltransferase_WSD1_N"/>
</dbReference>
<dbReference type="PANTHER" id="PTHR31650">
    <property type="entry name" value="O-ACYLTRANSFERASE (WSD1-LIKE) FAMILY PROTEIN"/>
    <property type="match status" value="1"/>
</dbReference>
<dbReference type="PANTHER" id="PTHR31650:SF44">
    <property type="entry name" value="WAX ESTER SYNTHASE_DIACYLGLYCEROL ACYLTRANSFERASE 10-RELATED"/>
    <property type="match status" value="1"/>
</dbReference>
<dbReference type="Pfam" id="PF06974">
    <property type="entry name" value="WS_DGAT_C"/>
    <property type="match status" value="1"/>
</dbReference>
<dbReference type="Pfam" id="PF03007">
    <property type="entry name" value="WS_DGAT_cat"/>
    <property type="match status" value="1"/>
</dbReference>
<dbReference type="SUPFAM" id="SSF52777">
    <property type="entry name" value="CoA-dependent acyltransferases"/>
    <property type="match status" value="1"/>
</dbReference>
<name>WSD8_ARATH</name>
<protein>
    <recommendedName>
        <fullName evidence="6">Wax ester synthase/diacylglycerol acyltransferase 8</fullName>
        <shortName evidence="6">WS/DGAT 8</shortName>
    </recommendedName>
    <alternativeName>
        <fullName evidence="6">Diacylglycerol O-acyltransferase WSD8</fullName>
        <ecNumber evidence="2">2.3.1.20</ecNumber>
    </alternativeName>
    <alternativeName>
        <fullName evidence="6">Long-chain-alcohol O-fatty-acyltransferase WSD8</fullName>
        <ecNumber evidence="2">2.3.1.75</ecNumber>
    </alternativeName>
</protein>
<proteinExistence type="evidence at transcript level"/>
<evidence type="ECO:0000250" key="1">
    <source>
        <dbReference type="UniProtKB" id="Q5KS41"/>
    </source>
</evidence>
<evidence type="ECO:0000250" key="2">
    <source>
        <dbReference type="UniProtKB" id="Q93ZR6"/>
    </source>
</evidence>
<evidence type="ECO:0000255" key="3"/>
<evidence type="ECO:0000255" key="4">
    <source>
        <dbReference type="PROSITE-ProRule" id="PRU00498"/>
    </source>
</evidence>
<evidence type="ECO:0000269" key="5">
    <source>
    </source>
</evidence>
<evidence type="ECO:0000303" key="6">
    <source>
    </source>
</evidence>
<evidence type="ECO:0000305" key="7"/>
<evidence type="ECO:0000312" key="8">
    <source>
        <dbReference type="Araport" id="AT5G16350"/>
    </source>
</evidence>
<evidence type="ECO:0000312" key="9">
    <source>
        <dbReference type="EMBL" id="BAB09602.1"/>
    </source>
</evidence>
<comment type="function">
    <text evidence="2">Bifunctional wax ester synthase/diacylglycerol acyltransferase (By similarity). Involved in cuticular wax biosynthesis (By similarity).</text>
</comment>
<comment type="catalytic activity">
    <reaction evidence="2">
        <text>an acyl-CoA + a 1,2-diacyl-sn-glycerol = a triacyl-sn-glycerol + CoA</text>
        <dbReference type="Rhea" id="RHEA:10868"/>
        <dbReference type="ChEBI" id="CHEBI:17815"/>
        <dbReference type="ChEBI" id="CHEBI:57287"/>
        <dbReference type="ChEBI" id="CHEBI:58342"/>
        <dbReference type="ChEBI" id="CHEBI:64615"/>
        <dbReference type="EC" id="2.3.1.20"/>
    </reaction>
</comment>
<comment type="catalytic activity">
    <reaction evidence="2">
        <text>a long chain fatty alcohol + a fatty acyl-CoA = a wax ester + CoA</text>
        <dbReference type="Rhea" id="RHEA:38443"/>
        <dbReference type="ChEBI" id="CHEBI:10036"/>
        <dbReference type="ChEBI" id="CHEBI:17135"/>
        <dbReference type="ChEBI" id="CHEBI:57287"/>
        <dbReference type="ChEBI" id="CHEBI:77636"/>
        <dbReference type="EC" id="2.3.1.75"/>
    </reaction>
</comment>
<comment type="pathway">
    <text evidence="2">Glycerolipid metabolism; triacylglycerol biosynthesis.</text>
</comment>
<comment type="pathway">
    <text evidence="2">Lipid metabolism.</text>
</comment>
<comment type="subcellular location">
    <subcellularLocation>
        <location evidence="1">Cell membrane</location>
        <topology evidence="3">Single-pass membrane protein</topology>
    </subcellularLocation>
    <subcellularLocation>
        <location evidence="2">Endoplasmic reticulum membrane</location>
        <topology evidence="3">Single-pass membrane protein</topology>
    </subcellularLocation>
</comment>
<comment type="tissue specificity">
    <text evidence="5">Mostly expressed in flowers and siliques and at low levels in stems.</text>
</comment>
<comment type="similarity">
    <text evidence="7">In the N-terminal section; belongs to the long-chain O-acyltransferase family.</text>
</comment>